<organismHost>
    <name type="scientific">Escherichia coli</name>
    <dbReference type="NCBI Taxonomy" id="562"/>
</organismHost>
<accession>P13300</accession>
<organism>
    <name type="scientific">Enterobacteria phage T4</name>
    <name type="common">Bacteriophage T4</name>
    <dbReference type="NCBI Taxonomy" id="10665"/>
    <lineage>
        <taxon>Viruses</taxon>
        <taxon>Duplodnaviria</taxon>
        <taxon>Heunggongvirae</taxon>
        <taxon>Uroviricota</taxon>
        <taxon>Caudoviricetes</taxon>
        <taxon>Straboviridae</taxon>
        <taxon>Tevenvirinae</taxon>
        <taxon>Tequatrovirus</taxon>
    </lineage>
</organism>
<feature type="chain" id="PRO_0000175058" description="Thymidine kinase">
    <location>
        <begin position="1"/>
        <end position="193"/>
    </location>
</feature>
<feature type="binding site" evidence="1">
    <location>
        <begin position="9"/>
        <end position="16"/>
    </location>
    <ligand>
        <name>ATP</name>
        <dbReference type="ChEBI" id="CHEBI:30616"/>
    </ligand>
</feature>
<protein>
    <recommendedName>
        <fullName>Thymidine kinase</fullName>
        <ecNumber>2.7.1.21</ecNumber>
    </recommendedName>
</protein>
<dbReference type="EC" id="2.7.1.21"/>
<dbReference type="EMBL" id="X04567">
    <property type="protein sequence ID" value="CAA28234.1"/>
    <property type="molecule type" value="Genomic_DNA"/>
</dbReference>
<dbReference type="EMBL" id="AF158101">
    <property type="protein sequence ID" value="AAD42663.1"/>
    <property type="molecule type" value="Genomic_DNA"/>
</dbReference>
<dbReference type="PIR" id="JF0016">
    <property type="entry name" value="KIBPT4"/>
</dbReference>
<dbReference type="RefSeq" id="NP_049719.1">
    <property type="nucleotide sequence ID" value="NC_000866.4"/>
</dbReference>
<dbReference type="SMR" id="P13300"/>
<dbReference type="GeneID" id="1258712"/>
<dbReference type="KEGG" id="vg:1258712"/>
<dbReference type="OrthoDB" id="9611at10239"/>
<dbReference type="Proteomes" id="UP000009087">
    <property type="component" value="Segment"/>
</dbReference>
<dbReference type="GO" id="GO:0005524">
    <property type="term" value="F:ATP binding"/>
    <property type="evidence" value="ECO:0007669"/>
    <property type="project" value="UniProtKB-KW"/>
</dbReference>
<dbReference type="GO" id="GO:0004797">
    <property type="term" value="F:thymidine kinase activity"/>
    <property type="evidence" value="ECO:0007669"/>
    <property type="project" value="UniProtKB-EC"/>
</dbReference>
<dbReference type="GO" id="GO:0071897">
    <property type="term" value="P:DNA biosynthetic process"/>
    <property type="evidence" value="ECO:0007669"/>
    <property type="project" value="UniProtKB-KW"/>
</dbReference>
<dbReference type="GO" id="GO:0046104">
    <property type="term" value="P:thymidine metabolic process"/>
    <property type="evidence" value="ECO:0007669"/>
    <property type="project" value="TreeGrafter"/>
</dbReference>
<dbReference type="Gene3D" id="3.30.60.20">
    <property type="match status" value="1"/>
</dbReference>
<dbReference type="Gene3D" id="3.40.50.300">
    <property type="entry name" value="P-loop containing nucleotide triphosphate hydrolases"/>
    <property type="match status" value="1"/>
</dbReference>
<dbReference type="HAMAP" id="MF_00124">
    <property type="entry name" value="Thymidine_kinase"/>
    <property type="match status" value="1"/>
</dbReference>
<dbReference type="InterPro" id="IPR027417">
    <property type="entry name" value="P-loop_NTPase"/>
</dbReference>
<dbReference type="InterPro" id="IPR001267">
    <property type="entry name" value="Thymidine_kinase"/>
</dbReference>
<dbReference type="InterPro" id="IPR020633">
    <property type="entry name" value="Thymidine_kinase_CS"/>
</dbReference>
<dbReference type="NCBIfam" id="NF003300">
    <property type="entry name" value="PRK04296.1-5"/>
    <property type="match status" value="1"/>
</dbReference>
<dbReference type="PANTHER" id="PTHR11441">
    <property type="entry name" value="THYMIDINE KINASE"/>
    <property type="match status" value="1"/>
</dbReference>
<dbReference type="PANTHER" id="PTHR11441:SF0">
    <property type="entry name" value="THYMIDINE KINASE, CYTOSOLIC"/>
    <property type="match status" value="1"/>
</dbReference>
<dbReference type="Pfam" id="PF00265">
    <property type="entry name" value="TK"/>
    <property type="match status" value="1"/>
</dbReference>
<dbReference type="PIRSF" id="PIRSF035805">
    <property type="entry name" value="TK_cell"/>
    <property type="match status" value="1"/>
</dbReference>
<dbReference type="SUPFAM" id="SSF57716">
    <property type="entry name" value="Glucocorticoid receptor-like (DNA-binding domain)"/>
    <property type="match status" value="1"/>
</dbReference>
<dbReference type="SUPFAM" id="SSF52540">
    <property type="entry name" value="P-loop containing nucleoside triphosphate hydrolases"/>
    <property type="match status" value="1"/>
</dbReference>
<dbReference type="PROSITE" id="PS00603">
    <property type="entry name" value="TK_CELLULAR_TYPE"/>
    <property type="match status" value="1"/>
</dbReference>
<sequence length="193" mass="21622">MASLIFTYAAMNAGKSASLLIAAHNYKERGMSVLVLKPAIDTRDSVCEVVSRIGIKQEANIITDDMDIFEFYKWAEAQKDIHCVFVDEAQFLKTEQVHQLSRIVDTYNVPVMAYGLRTDFAGKLFEGSKELLAIADKLIELKAVCHCGKKAIMTARLMEDGTPVKEGNQICIGDEIYVSLCRKHWNELTKKLG</sequence>
<gene>
    <name type="primary">TK</name>
</gene>
<comment type="function">
    <text>This thymidine kinase is one of the enzymes that catalyze DNA precursor synthesis. Although tk is a nonessential gene, some strains of host E.coli do not support the growth of phages that lack this gene.</text>
</comment>
<comment type="catalytic activity">
    <reaction>
        <text>thymidine + ATP = dTMP + ADP + H(+)</text>
        <dbReference type="Rhea" id="RHEA:19129"/>
        <dbReference type="ChEBI" id="CHEBI:15378"/>
        <dbReference type="ChEBI" id="CHEBI:17748"/>
        <dbReference type="ChEBI" id="CHEBI:30616"/>
        <dbReference type="ChEBI" id="CHEBI:63528"/>
        <dbReference type="ChEBI" id="CHEBI:456216"/>
        <dbReference type="EC" id="2.7.1.21"/>
    </reaction>
</comment>
<comment type="similarity">
    <text evidence="2">Belongs to the thymidine kinase family.</text>
</comment>
<keyword id="KW-0067">ATP-binding</keyword>
<keyword id="KW-0237">DNA synthesis</keyword>
<keyword id="KW-0418">Kinase</keyword>
<keyword id="KW-0547">Nucleotide-binding</keyword>
<keyword id="KW-1185">Reference proteome</keyword>
<keyword id="KW-0808">Transferase</keyword>
<reference key="1">
    <citation type="journal article" date="1986" name="Nucleic Acids Res.">
        <title>Nucleotide sequence and analysis of the 58.3 to 65.5-kb early region of bacteriophage T4.</title>
        <authorList>
            <person name="Valerie K."/>
            <person name="Stevens J."/>
            <person name="Lynch M."/>
            <person name="Henderson E.E."/>
            <person name="de Riel J.K."/>
        </authorList>
    </citation>
    <scope>NUCLEOTIDE SEQUENCE [GENOMIC DNA]</scope>
</reference>
<reference key="2">
    <citation type="journal article" date="2003" name="Microbiol. Mol. Biol. Rev.">
        <title>Bacteriophage T4 genome.</title>
        <authorList>
            <person name="Miller E.S."/>
            <person name="Kutter E."/>
            <person name="Mosig G."/>
            <person name="Arisaka F."/>
            <person name="Kunisawa T."/>
            <person name="Ruger W."/>
        </authorList>
    </citation>
    <scope>NUCLEOTIDE SEQUENCE [LARGE SCALE GENOMIC DNA]</scope>
</reference>
<evidence type="ECO:0000250" key="1"/>
<evidence type="ECO:0000305" key="2"/>
<proteinExistence type="inferred from homology"/>
<name>KITH_BPT4</name>